<evidence type="ECO:0000255" key="1">
    <source>
        <dbReference type="HAMAP-Rule" id="MF_00636"/>
    </source>
</evidence>
<protein>
    <recommendedName>
        <fullName evidence="1">Nucleotide-binding protein AZOSEA20610</fullName>
    </recommendedName>
</protein>
<dbReference type="EMBL" id="CR555306">
    <property type="protein sequence ID" value="CAI08186.1"/>
    <property type="molecule type" value="Genomic_DNA"/>
</dbReference>
<dbReference type="RefSeq" id="WP_011237879.1">
    <property type="nucleotide sequence ID" value="NC_006513.1"/>
</dbReference>
<dbReference type="SMR" id="Q5P3C8"/>
<dbReference type="STRING" id="76114.ebA3650"/>
<dbReference type="KEGG" id="eba:ebA3650"/>
<dbReference type="eggNOG" id="COG1660">
    <property type="taxonomic scope" value="Bacteria"/>
</dbReference>
<dbReference type="HOGENOM" id="CLU_059558_1_1_4"/>
<dbReference type="OrthoDB" id="9784461at2"/>
<dbReference type="Proteomes" id="UP000006552">
    <property type="component" value="Chromosome"/>
</dbReference>
<dbReference type="GO" id="GO:0005524">
    <property type="term" value="F:ATP binding"/>
    <property type="evidence" value="ECO:0007669"/>
    <property type="project" value="UniProtKB-UniRule"/>
</dbReference>
<dbReference type="GO" id="GO:0005525">
    <property type="term" value="F:GTP binding"/>
    <property type="evidence" value="ECO:0007669"/>
    <property type="project" value="UniProtKB-UniRule"/>
</dbReference>
<dbReference type="HAMAP" id="MF_00636">
    <property type="entry name" value="RapZ_like"/>
    <property type="match status" value="1"/>
</dbReference>
<dbReference type="InterPro" id="IPR027417">
    <property type="entry name" value="P-loop_NTPase"/>
</dbReference>
<dbReference type="InterPro" id="IPR005337">
    <property type="entry name" value="RapZ-like"/>
</dbReference>
<dbReference type="InterPro" id="IPR053930">
    <property type="entry name" value="RapZ-like_N"/>
</dbReference>
<dbReference type="InterPro" id="IPR053931">
    <property type="entry name" value="RapZ_C"/>
</dbReference>
<dbReference type="NCBIfam" id="NF003828">
    <property type="entry name" value="PRK05416.1"/>
    <property type="match status" value="1"/>
</dbReference>
<dbReference type="PANTHER" id="PTHR30448">
    <property type="entry name" value="RNASE ADAPTER PROTEIN RAPZ"/>
    <property type="match status" value="1"/>
</dbReference>
<dbReference type="PANTHER" id="PTHR30448:SF0">
    <property type="entry name" value="RNASE ADAPTER PROTEIN RAPZ"/>
    <property type="match status" value="1"/>
</dbReference>
<dbReference type="Pfam" id="PF22740">
    <property type="entry name" value="PapZ_C"/>
    <property type="match status" value="1"/>
</dbReference>
<dbReference type="Pfam" id="PF03668">
    <property type="entry name" value="RapZ-like_N"/>
    <property type="match status" value="1"/>
</dbReference>
<dbReference type="PIRSF" id="PIRSF005052">
    <property type="entry name" value="P-loopkin"/>
    <property type="match status" value="1"/>
</dbReference>
<dbReference type="SUPFAM" id="SSF52540">
    <property type="entry name" value="P-loop containing nucleoside triphosphate hydrolases"/>
    <property type="match status" value="1"/>
</dbReference>
<proteinExistence type="inferred from homology"/>
<gene>
    <name type="ordered locus">AZOSEA20610</name>
    <name type="ORF">ebA3650</name>
</gene>
<sequence length="292" mass="32559">MQIVLISGLSGSGKSIALKVLEDVGYYAVDNLPATLLPELVAELSDTGHERVAIAVDVRSGASLLALPQQVEHLHALASDLRLIFLDARDDTLIARFSETRRRHPLASEDVSLAEAIQSERDALASIAELGHRIDTSELHANTLRAWIKDFLAIEATEGLTLMFQSFGFKYGIPLDADLVFDVRCLPNPHYDLRLRPFTGKDQPVIEFLDSFPEVGRMCEDIRRFVATWLPSYARDNRSYLTVAIGCTGGQHRSVYIAEWLGRHFSDTLRVLVRHRSAARRIVDHGADMADK</sequence>
<comment type="function">
    <text evidence="1">Displays ATPase and GTPase activities.</text>
</comment>
<comment type="similarity">
    <text evidence="1">Belongs to the RapZ-like family.</text>
</comment>
<keyword id="KW-0067">ATP-binding</keyword>
<keyword id="KW-0342">GTP-binding</keyword>
<keyword id="KW-0547">Nucleotide-binding</keyword>
<keyword id="KW-1185">Reference proteome</keyword>
<name>Y2061_AROAE</name>
<organism>
    <name type="scientific">Aromatoleum aromaticum (strain DSM 19018 / LMG 30748 / EbN1)</name>
    <name type="common">Azoarcus sp. (strain EbN1)</name>
    <dbReference type="NCBI Taxonomy" id="76114"/>
    <lineage>
        <taxon>Bacteria</taxon>
        <taxon>Pseudomonadati</taxon>
        <taxon>Pseudomonadota</taxon>
        <taxon>Betaproteobacteria</taxon>
        <taxon>Rhodocyclales</taxon>
        <taxon>Rhodocyclaceae</taxon>
        <taxon>Aromatoleum</taxon>
    </lineage>
</organism>
<feature type="chain" id="PRO_0000107680" description="Nucleotide-binding protein AZOSEA20610">
    <location>
        <begin position="1"/>
        <end position="292"/>
    </location>
</feature>
<feature type="binding site" evidence="1">
    <location>
        <begin position="8"/>
        <end position="15"/>
    </location>
    <ligand>
        <name>ATP</name>
        <dbReference type="ChEBI" id="CHEBI:30616"/>
    </ligand>
</feature>
<feature type="binding site" evidence="1">
    <location>
        <begin position="57"/>
        <end position="60"/>
    </location>
    <ligand>
        <name>GTP</name>
        <dbReference type="ChEBI" id="CHEBI:37565"/>
    </ligand>
</feature>
<accession>Q5P3C8</accession>
<reference key="1">
    <citation type="journal article" date="2005" name="Arch. Microbiol.">
        <title>The genome sequence of an anaerobic aromatic-degrading denitrifying bacterium, strain EbN1.</title>
        <authorList>
            <person name="Rabus R."/>
            <person name="Kube M."/>
            <person name="Heider J."/>
            <person name="Beck A."/>
            <person name="Heitmann K."/>
            <person name="Widdel F."/>
            <person name="Reinhardt R."/>
        </authorList>
    </citation>
    <scope>NUCLEOTIDE SEQUENCE [LARGE SCALE GENOMIC DNA]</scope>
    <source>
        <strain>DSM 19018 / LMG 30748 / EbN1</strain>
    </source>
</reference>